<accession>Q24X58</accession>
<comment type="function">
    <text evidence="1">Catalyzes the methylthiolation of N6-(dimethylallyl)adenosine (i(6)A), leading to the formation of 2-methylthio-N6-(dimethylallyl)adenosine (ms(2)i(6)A) at position 37 in tRNAs that read codons beginning with uridine.</text>
</comment>
<comment type="catalytic activity">
    <reaction evidence="1">
        <text>N(6)-dimethylallyladenosine(37) in tRNA + (sulfur carrier)-SH + AH2 + 2 S-adenosyl-L-methionine = 2-methylsulfanyl-N(6)-dimethylallyladenosine(37) in tRNA + (sulfur carrier)-H + 5'-deoxyadenosine + L-methionine + A + S-adenosyl-L-homocysteine + 2 H(+)</text>
        <dbReference type="Rhea" id="RHEA:37067"/>
        <dbReference type="Rhea" id="RHEA-COMP:10375"/>
        <dbReference type="Rhea" id="RHEA-COMP:10376"/>
        <dbReference type="Rhea" id="RHEA-COMP:14737"/>
        <dbReference type="Rhea" id="RHEA-COMP:14739"/>
        <dbReference type="ChEBI" id="CHEBI:13193"/>
        <dbReference type="ChEBI" id="CHEBI:15378"/>
        <dbReference type="ChEBI" id="CHEBI:17319"/>
        <dbReference type="ChEBI" id="CHEBI:17499"/>
        <dbReference type="ChEBI" id="CHEBI:29917"/>
        <dbReference type="ChEBI" id="CHEBI:57844"/>
        <dbReference type="ChEBI" id="CHEBI:57856"/>
        <dbReference type="ChEBI" id="CHEBI:59789"/>
        <dbReference type="ChEBI" id="CHEBI:64428"/>
        <dbReference type="ChEBI" id="CHEBI:74415"/>
        <dbReference type="ChEBI" id="CHEBI:74417"/>
        <dbReference type="EC" id="2.8.4.3"/>
    </reaction>
</comment>
<comment type="cofactor">
    <cofactor evidence="1">
        <name>[4Fe-4S] cluster</name>
        <dbReference type="ChEBI" id="CHEBI:49883"/>
    </cofactor>
    <text evidence="1">Binds 2 [4Fe-4S] clusters. One cluster is coordinated with 3 cysteines and an exchangeable S-adenosyl-L-methionine.</text>
</comment>
<comment type="subunit">
    <text evidence="1">Monomer.</text>
</comment>
<comment type="subcellular location">
    <subcellularLocation>
        <location evidence="1">Cytoplasm</location>
    </subcellularLocation>
</comment>
<comment type="similarity">
    <text evidence="1">Belongs to the methylthiotransferase family. MiaB subfamily.</text>
</comment>
<name>MIAB_DESHY</name>
<feature type="chain" id="PRO_0000374261" description="tRNA-2-methylthio-N(6)-dimethylallyladenosine synthase">
    <location>
        <begin position="1"/>
        <end position="447"/>
    </location>
</feature>
<feature type="domain" description="MTTase N-terminal" evidence="1">
    <location>
        <begin position="8"/>
        <end position="126"/>
    </location>
</feature>
<feature type="domain" description="Radical SAM core" evidence="2">
    <location>
        <begin position="148"/>
        <end position="378"/>
    </location>
</feature>
<feature type="domain" description="TRAM" evidence="1">
    <location>
        <begin position="381"/>
        <end position="444"/>
    </location>
</feature>
<feature type="binding site" evidence="1">
    <location>
        <position position="17"/>
    </location>
    <ligand>
        <name>[4Fe-4S] cluster</name>
        <dbReference type="ChEBI" id="CHEBI:49883"/>
        <label>1</label>
    </ligand>
</feature>
<feature type="binding site" evidence="1">
    <location>
        <position position="53"/>
    </location>
    <ligand>
        <name>[4Fe-4S] cluster</name>
        <dbReference type="ChEBI" id="CHEBI:49883"/>
        <label>1</label>
    </ligand>
</feature>
<feature type="binding site" evidence="1">
    <location>
        <position position="87"/>
    </location>
    <ligand>
        <name>[4Fe-4S] cluster</name>
        <dbReference type="ChEBI" id="CHEBI:49883"/>
        <label>1</label>
    </ligand>
</feature>
<feature type="binding site" evidence="1">
    <location>
        <position position="162"/>
    </location>
    <ligand>
        <name>[4Fe-4S] cluster</name>
        <dbReference type="ChEBI" id="CHEBI:49883"/>
        <label>2</label>
        <note>4Fe-4S-S-AdoMet</note>
    </ligand>
</feature>
<feature type="binding site" evidence="1">
    <location>
        <position position="166"/>
    </location>
    <ligand>
        <name>[4Fe-4S] cluster</name>
        <dbReference type="ChEBI" id="CHEBI:49883"/>
        <label>2</label>
        <note>4Fe-4S-S-AdoMet</note>
    </ligand>
</feature>
<feature type="binding site" evidence="1">
    <location>
        <position position="169"/>
    </location>
    <ligand>
        <name>[4Fe-4S] cluster</name>
        <dbReference type="ChEBI" id="CHEBI:49883"/>
        <label>2</label>
        <note>4Fe-4S-S-AdoMet</note>
    </ligand>
</feature>
<reference key="1">
    <citation type="journal article" date="2006" name="J. Bacteriol.">
        <title>Complete genome sequence of the dehalorespiring bacterium Desulfitobacterium hafniense Y51 and comparison with Dehalococcoides ethenogenes 195.</title>
        <authorList>
            <person name="Nonaka H."/>
            <person name="Keresztes G."/>
            <person name="Shinoda Y."/>
            <person name="Ikenaga Y."/>
            <person name="Abe M."/>
            <person name="Naito K."/>
            <person name="Inatomi K."/>
            <person name="Furukawa K."/>
            <person name="Inui M."/>
            <person name="Yukawa H."/>
        </authorList>
    </citation>
    <scope>NUCLEOTIDE SEQUENCE [LARGE SCALE GENOMIC DNA]</scope>
    <source>
        <strain>Y51</strain>
    </source>
</reference>
<dbReference type="EC" id="2.8.4.3" evidence="1"/>
<dbReference type="EMBL" id="AP008230">
    <property type="protein sequence ID" value="BAE83384.1"/>
    <property type="molecule type" value="Genomic_DNA"/>
</dbReference>
<dbReference type="RefSeq" id="WP_005811605.1">
    <property type="nucleotide sequence ID" value="NC_007907.1"/>
</dbReference>
<dbReference type="SMR" id="Q24X58"/>
<dbReference type="STRING" id="138119.DSY1595"/>
<dbReference type="KEGG" id="dsy:DSY1595"/>
<dbReference type="eggNOG" id="COG0621">
    <property type="taxonomic scope" value="Bacteria"/>
</dbReference>
<dbReference type="HOGENOM" id="CLU_018697_2_0_9"/>
<dbReference type="Proteomes" id="UP000001946">
    <property type="component" value="Chromosome"/>
</dbReference>
<dbReference type="GO" id="GO:0005829">
    <property type="term" value="C:cytosol"/>
    <property type="evidence" value="ECO:0007669"/>
    <property type="project" value="TreeGrafter"/>
</dbReference>
<dbReference type="GO" id="GO:0051539">
    <property type="term" value="F:4 iron, 4 sulfur cluster binding"/>
    <property type="evidence" value="ECO:0007669"/>
    <property type="project" value="UniProtKB-UniRule"/>
</dbReference>
<dbReference type="GO" id="GO:0046872">
    <property type="term" value="F:metal ion binding"/>
    <property type="evidence" value="ECO:0007669"/>
    <property type="project" value="UniProtKB-KW"/>
</dbReference>
<dbReference type="GO" id="GO:0035597">
    <property type="term" value="F:N6-isopentenyladenosine methylthiotransferase activity"/>
    <property type="evidence" value="ECO:0007669"/>
    <property type="project" value="TreeGrafter"/>
</dbReference>
<dbReference type="CDD" id="cd01335">
    <property type="entry name" value="Radical_SAM"/>
    <property type="match status" value="1"/>
</dbReference>
<dbReference type="FunFam" id="3.40.50.12160:FF:000003">
    <property type="entry name" value="CDK5 regulatory subunit-associated protein 1"/>
    <property type="match status" value="1"/>
</dbReference>
<dbReference type="FunFam" id="3.80.30.20:FF:000001">
    <property type="entry name" value="tRNA-2-methylthio-N(6)-dimethylallyladenosine synthase 2"/>
    <property type="match status" value="1"/>
</dbReference>
<dbReference type="Gene3D" id="3.40.50.12160">
    <property type="entry name" value="Methylthiotransferase, N-terminal domain"/>
    <property type="match status" value="1"/>
</dbReference>
<dbReference type="Gene3D" id="3.80.30.20">
    <property type="entry name" value="tm_1862 like domain"/>
    <property type="match status" value="1"/>
</dbReference>
<dbReference type="HAMAP" id="MF_01864">
    <property type="entry name" value="tRNA_metthiotr_MiaB"/>
    <property type="match status" value="1"/>
</dbReference>
<dbReference type="InterPro" id="IPR006638">
    <property type="entry name" value="Elp3/MiaA/NifB-like_rSAM"/>
</dbReference>
<dbReference type="InterPro" id="IPR005839">
    <property type="entry name" value="Methylthiotransferase"/>
</dbReference>
<dbReference type="InterPro" id="IPR020612">
    <property type="entry name" value="Methylthiotransferase_CS"/>
</dbReference>
<dbReference type="InterPro" id="IPR013848">
    <property type="entry name" value="Methylthiotransferase_N"/>
</dbReference>
<dbReference type="InterPro" id="IPR038135">
    <property type="entry name" value="Methylthiotransferase_N_sf"/>
</dbReference>
<dbReference type="InterPro" id="IPR006463">
    <property type="entry name" value="MiaB_methiolase"/>
</dbReference>
<dbReference type="InterPro" id="IPR007197">
    <property type="entry name" value="rSAM"/>
</dbReference>
<dbReference type="InterPro" id="IPR023404">
    <property type="entry name" value="rSAM_horseshoe"/>
</dbReference>
<dbReference type="InterPro" id="IPR002792">
    <property type="entry name" value="TRAM_dom"/>
</dbReference>
<dbReference type="NCBIfam" id="TIGR01574">
    <property type="entry name" value="miaB-methiolase"/>
    <property type="match status" value="1"/>
</dbReference>
<dbReference type="NCBIfam" id="TIGR00089">
    <property type="entry name" value="MiaB/RimO family radical SAM methylthiotransferase"/>
    <property type="match status" value="1"/>
</dbReference>
<dbReference type="PANTHER" id="PTHR43020">
    <property type="entry name" value="CDK5 REGULATORY SUBUNIT-ASSOCIATED PROTEIN 1"/>
    <property type="match status" value="1"/>
</dbReference>
<dbReference type="PANTHER" id="PTHR43020:SF2">
    <property type="entry name" value="MITOCHONDRIAL TRNA METHYLTHIOTRANSFERASE CDK5RAP1"/>
    <property type="match status" value="1"/>
</dbReference>
<dbReference type="Pfam" id="PF04055">
    <property type="entry name" value="Radical_SAM"/>
    <property type="match status" value="1"/>
</dbReference>
<dbReference type="Pfam" id="PF01938">
    <property type="entry name" value="TRAM"/>
    <property type="match status" value="1"/>
</dbReference>
<dbReference type="Pfam" id="PF00919">
    <property type="entry name" value="UPF0004"/>
    <property type="match status" value="1"/>
</dbReference>
<dbReference type="SFLD" id="SFLDF00273">
    <property type="entry name" value="(dimethylallyl)adenosine_tRNA"/>
    <property type="match status" value="1"/>
</dbReference>
<dbReference type="SFLD" id="SFLDG01082">
    <property type="entry name" value="B12-binding_domain_containing"/>
    <property type="match status" value="1"/>
</dbReference>
<dbReference type="SFLD" id="SFLDS00029">
    <property type="entry name" value="Radical_SAM"/>
    <property type="match status" value="1"/>
</dbReference>
<dbReference type="SMART" id="SM00729">
    <property type="entry name" value="Elp3"/>
    <property type="match status" value="1"/>
</dbReference>
<dbReference type="SUPFAM" id="SSF102114">
    <property type="entry name" value="Radical SAM enzymes"/>
    <property type="match status" value="1"/>
</dbReference>
<dbReference type="PROSITE" id="PS51449">
    <property type="entry name" value="MTTASE_N"/>
    <property type="match status" value="1"/>
</dbReference>
<dbReference type="PROSITE" id="PS01278">
    <property type="entry name" value="MTTASE_RADICAL"/>
    <property type="match status" value="1"/>
</dbReference>
<dbReference type="PROSITE" id="PS51918">
    <property type="entry name" value="RADICAL_SAM"/>
    <property type="match status" value="1"/>
</dbReference>
<dbReference type="PROSITE" id="PS50926">
    <property type="entry name" value="TRAM"/>
    <property type="match status" value="1"/>
</dbReference>
<protein>
    <recommendedName>
        <fullName evidence="1">tRNA-2-methylthio-N(6)-dimethylallyladenosine synthase</fullName>
        <ecNumber evidence="1">2.8.4.3</ecNumber>
    </recommendedName>
    <alternativeName>
        <fullName evidence="1">(Dimethylallyl)adenosine tRNA methylthiotransferase MiaB</fullName>
    </alternativeName>
    <alternativeName>
        <fullName evidence="1">tRNA-i(6)A37 methylthiotransferase</fullName>
    </alternativeName>
</protein>
<sequence length="447" mass="50619">MSITKVPKKVVTLAYGCQMSERDADTLTEISSQKGYVRSQELEQADLIIVNTCCVRESAENKILGKIGELKHLKEANPQLKIAISGCMVQQPGALERLRKRAPHVDIWAGTHNIHEFQRLLEEAEEKGKVAEVWEKPRETQESVLLAAKGKLKAYVNISYGCNNFCTYCIVPHVRGRERSRQPEEILAEIRALVETGCREVTLLGQNVNSYGQDLDRAYDFADLLKDVDSIDGLWRVRFMTSHPKDLSDKLIETIAAGTHLCEHIHLPFQAGSDEILKGMNRKYTREYYLSRIAQIKVIIPQVSLTTDIIVGFPGETEEDFEQTLELIRQVRYSQAFTFMYSKRSGTPAAQMAEQIPLDIKKRRLQQLITVQNAQSLAWRQEMIGKTCEVLVEGPSKSNPDRLTGRTRGYELVVFPGEAQLIGTLVQVLIQDANSWTLFGECRADRH</sequence>
<proteinExistence type="inferred from homology"/>
<evidence type="ECO:0000255" key="1">
    <source>
        <dbReference type="HAMAP-Rule" id="MF_01864"/>
    </source>
</evidence>
<evidence type="ECO:0000255" key="2">
    <source>
        <dbReference type="PROSITE-ProRule" id="PRU01266"/>
    </source>
</evidence>
<organism>
    <name type="scientific">Desulfitobacterium hafniense (strain Y51)</name>
    <dbReference type="NCBI Taxonomy" id="138119"/>
    <lineage>
        <taxon>Bacteria</taxon>
        <taxon>Bacillati</taxon>
        <taxon>Bacillota</taxon>
        <taxon>Clostridia</taxon>
        <taxon>Eubacteriales</taxon>
        <taxon>Desulfitobacteriaceae</taxon>
        <taxon>Desulfitobacterium</taxon>
    </lineage>
</organism>
<keyword id="KW-0004">4Fe-4S</keyword>
<keyword id="KW-0963">Cytoplasm</keyword>
<keyword id="KW-0408">Iron</keyword>
<keyword id="KW-0411">Iron-sulfur</keyword>
<keyword id="KW-0479">Metal-binding</keyword>
<keyword id="KW-1185">Reference proteome</keyword>
<keyword id="KW-0949">S-adenosyl-L-methionine</keyword>
<keyword id="KW-0808">Transferase</keyword>
<keyword id="KW-0819">tRNA processing</keyword>
<gene>
    <name evidence="1" type="primary">miaB</name>
    <name type="ordered locus">DSY1595</name>
</gene>